<feature type="chain" id="PRO_0000073074" description="Ovomucoid">
    <location>
        <begin position="1" status="less than"/>
        <end position="54" status="greater than"/>
    </location>
</feature>
<feature type="domain" description="Kazal-like" evidence="1">
    <location>
        <begin position="4"/>
        <end position="54"/>
    </location>
</feature>
<feature type="site" description="Reactive bond 3">
    <location>
        <begin position="16"/>
        <end position="17"/>
    </location>
</feature>
<feature type="glycosylation site" description="N-linked (GlcNAc...) asparagine">
    <location>
        <position position="43"/>
    </location>
</feature>
<feature type="disulfide bond">
    <location>
        <begin position="6"/>
        <end position="36"/>
    </location>
</feature>
<feature type="disulfide bond">
    <location>
        <begin position="14"/>
        <end position="33"/>
    </location>
</feature>
<feature type="disulfide bond">
    <location>
        <begin position="22"/>
        <end position="54"/>
    </location>
</feature>
<feature type="non-terminal residue">
    <location>
        <position position="1"/>
    </location>
</feature>
<feature type="non-terminal residue">
    <location>
        <position position="54"/>
    </location>
</feature>
<organism>
    <name type="scientific">Casuarius casuarius</name>
    <name type="common">Southern cassowary</name>
    <name type="synonym">Struthio casuarius</name>
    <dbReference type="NCBI Taxonomy" id="8787"/>
    <lineage>
        <taxon>Eukaryota</taxon>
        <taxon>Metazoa</taxon>
        <taxon>Chordata</taxon>
        <taxon>Craniata</taxon>
        <taxon>Vertebrata</taxon>
        <taxon>Euteleostomi</taxon>
        <taxon>Archelosauria</taxon>
        <taxon>Archosauria</taxon>
        <taxon>Dinosauria</taxon>
        <taxon>Saurischia</taxon>
        <taxon>Theropoda</taxon>
        <taxon>Coelurosauria</taxon>
        <taxon>Aves</taxon>
        <taxon>Palaeognathae</taxon>
        <taxon>Casuariiformes</taxon>
        <taxon>Casuariidae</taxon>
        <taxon>Casuarius</taxon>
    </lineage>
</organism>
<dbReference type="PIR" id="C31436">
    <property type="entry name" value="C31436"/>
</dbReference>
<dbReference type="SMR" id="P62337"/>
<dbReference type="GO" id="GO:0005576">
    <property type="term" value="C:extracellular region"/>
    <property type="evidence" value="ECO:0007669"/>
    <property type="project" value="UniProtKB-SubCell"/>
</dbReference>
<dbReference type="GO" id="GO:0004867">
    <property type="term" value="F:serine-type endopeptidase inhibitor activity"/>
    <property type="evidence" value="ECO:0007669"/>
    <property type="project" value="UniProtKB-KW"/>
</dbReference>
<dbReference type="CDD" id="cd00104">
    <property type="entry name" value="KAZAL_FS"/>
    <property type="match status" value="1"/>
</dbReference>
<dbReference type="FunFam" id="3.30.60.30:FF:000037">
    <property type="entry name" value="Ovomucoid"/>
    <property type="match status" value="1"/>
</dbReference>
<dbReference type="Gene3D" id="3.30.60.30">
    <property type="match status" value="1"/>
</dbReference>
<dbReference type="InterPro" id="IPR051597">
    <property type="entry name" value="Bifunctional_prot_inhibitor"/>
</dbReference>
<dbReference type="InterPro" id="IPR002350">
    <property type="entry name" value="Kazal_dom"/>
</dbReference>
<dbReference type="InterPro" id="IPR036058">
    <property type="entry name" value="Kazal_dom_sf"/>
</dbReference>
<dbReference type="InterPro" id="IPR001239">
    <property type="entry name" value="Prot_inh_Kazal-m"/>
</dbReference>
<dbReference type="PANTHER" id="PTHR47729:SF1">
    <property type="entry name" value="OVOMUCOID-LIKE-RELATED"/>
    <property type="match status" value="1"/>
</dbReference>
<dbReference type="PANTHER" id="PTHR47729">
    <property type="entry name" value="SERINE PEPTIDASE INHIBITOR, KAZAL TYPE 2, TANDEM DUPLICATE 1-RELATED"/>
    <property type="match status" value="1"/>
</dbReference>
<dbReference type="Pfam" id="PF00050">
    <property type="entry name" value="Kazal_1"/>
    <property type="match status" value="1"/>
</dbReference>
<dbReference type="PRINTS" id="PR00290">
    <property type="entry name" value="KAZALINHBTR"/>
</dbReference>
<dbReference type="SMART" id="SM00280">
    <property type="entry name" value="KAZAL"/>
    <property type="match status" value="1"/>
</dbReference>
<dbReference type="SUPFAM" id="SSF100895">
    <property type="entry name" value="Kazal-type serine protease inhibitors"/>
    <property type="match status" value="1"/>
</dbReference>
<dbReference type="PROSITE" id="PS00282">
    <property type="entry name" value="KAZAL_1"/>
    <property type="match status" value="1"/>
</dbReference>
<dbReference type="PROSITE" id="PS51465">
    <property type="entry name" value="KAZAL_2"/>
    <property type="match status" value="1"/>
</dbReference>
<protein>
    <recommendedName>
        <fullName>Ovomucoid</fullName>
    </recommendedName>
</protein>
<keyword id="KW-0903">Direct protein sequencing</keyword>
<keyword id="KW-1015">Disulfide bond</keyword>
<keyword id="KW-0325">Glycoprotein</keyword>
<keyword id="KW-0646">Protease inhibitor</keyword>
<keyword id="KW-0677">Repeat</keyword>
<keyword id="KW-0964">Secreted</keyword>
<keyword id="KW-0722">Serine protease inhibitor</keyword>
<accession>P62337</accession>
<accession>P05559</accession>
<reference key="1">
    <citation type="journal article" date="1987" name="Biochemistry">
        <title>Ovomucoid third domains from 100 avian species: isolation, sequences, and hypervariability of enzyme-inhibitor contact residues.</title>
        <authorList>
            <person name="Laskowski M. Jr."/>
            <person name="Kato I."/>
            <person name="Ardelt W."/>
            <person name="Cook J."/>
            <person name="Denton A."/>
            <person name="Empie M.W."/>
            <person name="Kohr W.J."/>
            <person name="Park S.J."/>
            <person name="Parks K."/>
            <person name="Schatzley B.L."/>
            <person name="Schoenberger O.L."/>
            <person name="Tashiro M."/>
            <person name="Vichot G."/>
            <person name="Whatley H.E."/>
            <person name="Wieczorek A."/>
            <person name="Wieczorek M."/>
        </authorList>
    </citation>
    <scope>PROTEIN SEQUENCE</scope>
</reference>
<sequence length="54" mass="5846">FATVDCSEYPKPVCSPEYMPLCGSDSKTYNNKCDFCSAVVESNGTLTLGHFGKC</sequence>
<proteinExistence type="evidence at protein level"/>
<comment type="subcellular location">
    <subcellularLocation>
        <location>Secreted</location>
    </subcellularLocation>
</comment>
<comment type="domain">
    <text>Avian ovomucoid consists of three homologous, tandem Kazal family inhibitory domains.</text>
</comment>
<evidence type="ECO:0000255" key="1">
    <source>
        <dbReference type="PROSITE-ProRule" id="PRU00798"/>
    </source>
</evidence>
<name>IOVO_CASCA</name>